<proteinExistence type="evidence at transcript level"/>
<organism>
    <name type="scientific">Gallus gallus</name>
    <name type="common">Chicken</name>
    <dbReference type="NCBI Taxonomy" id="9031"/>
    <lineage>
        <taxon>Eukaryota</taxon>
        <taxon>Metazoa</taxon>
        <taxon>Chordata</taxon>
        <taxon>Craniata</taxon>
        <taxon>Vertebrata</taxon>
        <taxon>Euteleostomi</taxon>
        <taxon>Archelosauria</taxon>
        <taxon>Archosauria</taxon>
        <taxon>Dinosauria</taxon>
        <taxon>Saurischia</taxon>
        <taxon>Theropoda</taxon>
        <taxon>Coelurosauria</taxon>
        <taxon>Aves</taxon>
        <taxon>Neognathae</taxon>
        <taxon>Galloanserae</taxon>
        <taxon>Galliformes</taxon>
        <taxon>Phasianidae</taxon>
        <taxon>Phasianinae</taxon>
        <taxon>Gallus</taxon>
    </lineage>
</organism>
<gene>
    <name type="primary">ANKMY2</name>
    <name type="ORF">RCJMB04_2i2</name>
</gene>
<evidence type="ECO:0000250" key="1"/>
<evidence type="ECO:0000255" key="2">
    <source>
        <dbReference type="PROSITE-ProRule" id="PRU00134"/>
    </source>
</evidence>
<evidence type="ECO:0000256" key="3">
    <source>
        <dbReference type="SAM" id="MobiDB-lite"/>
    </source>
</evidence>
<protein>
    <recommendedName>
        <fullName>Ankyrin repeat and MYND domain-containing protein 2</fullName>
    </recommendedName>
</protein>
<sequence>MAPPRKGELSPEEKDLLGVIAKGNVEEAGRLLGSKNVHVNCLDEHGMTPLMHAAYKGKVDMCRLLLRHGADVNCNEHEHGYTALMFAGLSGNKEITWMMLEAGAETDVVNSVGRTAAQMAAFVGQHDCVTIINNFFPRERLDYYTKPQGLDKEPKLPVKLAGPLHKIITTTNMHPVKIVLLVKENPLLAEVEALQKCYRVLDLICEKCMKQKDMNEVLAMKMHYISCIFQKCVTFLKEREDKLDGFIKSLLKGRDKDGFPVYQEKLIRESIRKFPYCEATLLQQLVRSIAPVELGSDPTAFSVLTQAITGQVGFVDAEFCTTCGEKGADKRCSVCKVVMYCDQNCQKTHWFTHKKVCKTLKEIHEKQELEAAKEKRRQEKKQKKDEAQLEEAGATSEEQSAPGPDATKEADPNLWIQTDQTEETELTKEPEARAPRPDSPLESETALADIALQKIQDSEE</sequence>
<dbReference type="EMBL" id="AJ719452">
    <property type="protein sequence ID" value="CAG31111.1"/>
    <property type="molecule type" value="mRNA"/>
</dbReference>
<dbReference type="RefSeq" id="NP_001026150.1">
    <property type="nucleotide sequence ID" value="NM_001030979.1"/>
</dbReference>
<dbReference type="SMR" id="Q5ZMD2"/>
<dbReference type="FunCoup" id="Q5ZMD2">
    <property type="interactions" value="1383"/>
</dbReference>
<dbReference type="STRING" id="9031.ENSGALP00000017545"/>
<dbReference type="PaxDb" id="9031-ENSGALP00000017545"/>
<dbReference type="GeneID" id="420593"/>
<dbReference type="KEGG" id="gga:420593"/>
<dbReference type="CTD" id="57037"/>
<dbReference type="VEuPathDB" id="HostDB:geneid_420593"/>
<dbReference type="eggNOG" id="KOG1710">
    <property type="taxonomic scope" value="Eukaryota"/>
</dbReference>
<dbReference type="InParanoid" id="Q5ZMD2"/>
<dbReference type="OrthoDB" id="10257049at2759"/>
<dbReference type="PhylomeDB" id="Q5ZMD2"/>
<dbReference type="PRO" id="PR:Q5ZMD2"/>
<dbReference type="Proteomes" id="UP000000539">
    <property type="component" value="Unassembled WGS sequence"/>
</dbReference>
<dbReference type="GO" id="GO:0005929">
    <property type="term" value="C:cilium"/>
    <property type="evidence" value="ECO:0007669"/>
    <property type="project" value="UniProtKB-SubCell"/>
</dbReference>
<dbReference type="GO" id="GO:0008270">
    <property type="term" value="F:zinc ion binding"/>
    <property type="evidence" value="ECO:0007669"/>
    <property type="project" value="UniProtKB-KW"/>
</dbReference>
<dbReference type="FunFam" id="1.25.40.20:FF:000182">
    <property type="entry name" value="Ankyrin repeat and MYND domain containing 2a"/>
    <property type="match status" value="1"/>
</dbReference>
<dbReference type="FunFam" id="6.10.140.2220:FF:000010">
    <property type="entry name" value="Ankyrin repeat and MYND domain-containing protein 2"/>
    <property type="match status" value="1"/>
</dbReference>
<dbReference type="Gene3D" id="6.10.140.2220">
    <property type="match status" value="1"/>
</dbReference>
<dbReference type="Gene3D" id="1.25.40.20">
    <property type="entry name" value="Ankyrin repeat-containing domain"/>
    <property type="match status" value="1"/>
</dbReference>
<dbReference type="InterPro" id="IPR052452">
    <property type="entry name" value="Ankyrin-MYND_dom_contain_2"/>
</dbReference>
<dbReference type="InterPro" id="IPR002110">
    <property type="entry name" value="Ankyrin_rpt"/>
</dbReference>
<dbReference type="InterPro" id="IPR036770">
    <property type="entry name" value="Ankyrin_rpt-contain_sf"/>
</dbReference>
<dbReference type="InterPro" id="IPR002893">
    <property type="entry name" value="Znf_MYND"/>
</dbReference>
<dbReference type="PANTHER" id="PTHR24150">
    <property type="entry name" value="ANKYRIN REPEAT AND MYND DOMAIN-CONTAINING PROTEIN 2"/>
    <property type="match status" value="1"/>
</dbReference>
<dbReference type="PANTHER" id="PTHR24150:SF8">
    <property type="entry name" value="ANKYRIN REPEAT AND MYND DOMAIN-CONTAINING PROTEIN 2"/>
    <property type="match status" value="1"/>
</dbReference>
<dbReference type="Pfam" id="PF12796">
    <property type="entry name" value="Ank_2"/>
    <property type="match status" value="1"/>
</dbReference>
<dbReference type="Pfam" id="PF01753">
    <property type="entry name" value="zf-MYND"/>
    <property type="match status" value="1"/>
</dbReference>
<dbReference type="SMART" id="SM00248">
    <property type="entry name" value="ANK"/>
    <property type="match status" value="3"/>
</dbReference>
<dbReference type="SUPFAM" id="SSF48403">
    <property type="entry name" value="Ankyrin repeat"/>
    <property type="match status" value="1"/>
</dbReference>
<dbReference type="SUPFAM" id="SSF144232">
    <property type="entry name" value="HIT/MYND zinc finger-like"/>
    <property type="match status" value="1"/>
</dbReference>
<dbReference type="PROSITE" id="PS50297">
    <property type="entry name" value="ANK_REP_REGION"/>
    <property type="match status" value="1"/>
</dbReference>
<dbReference type="PROSITE" id="PS50088">
    <property type="entry name" value="ANK_REPEAT"/>
    <property type="match status" value="2"/>
</dbReference>
<dbReference type="PROSITE" id="PS01360">
    <property type="entry name" value="ZF_MYND_1"/>
    <property type="match status" value="1"/>
</dbReference>
<dbReference type="PROSITE" id="PS50865">
    <property type="entry name" value="ZF_MYND_2"/>
    <property type="match status" value="1"/>
</dbReference>
<reference key="1">
    <citation type="journal article" date="2005" name="Genome Biol.">
        <title>Full-length cDNAs from chicken bursal lymphocytes to facilitate gene function analysis.</title>
        <authorList>
            <person name="Caldwell R.B."/>
            <person name="Kierzek A.M."/>
            <person name="Arakawa H."/>
            <person name="Bezzubov Y."/>
            <person name="Zaim J."/>
            <person name="Fiedler P."/>
            <person name="Kutter S."/>
            <person name="Blagodatski A."/>
            <person name="Kostovska D."/>
            <person name="Koter M."/>
            <person name="Plachy J."/>
            <person name="Carninci P."/>
            <person name="Hayashizaki Y."/>
            <person name="Buerstedde J.-M."/>
        </authorList>
    </citation>
    <scope>NUCLEOTIDE SEQUENCE [LARGE SCALE MRNA]</scope>
    <source>
        <strain>CB</strain>
        <tissue>Bursa of Fabricius</tissue>
    </source>
</reference>
<keyword id="KW-0040">ANK repeat</keyword>
<keyword id="KW-0966">Cell projection</keyword>
<keyword id="KW-0969">Cilium</keyword>
<keyword id="KW-0479">Metal-binding</keyword>
<keyword id="KW-1185">Reference proteome</keyword>
<keyword id="KW-0677">Repeat</keyword>
<keyword id="KW-0862">Zinc</keyword>
<keyword id="KW-0863">Zinc-finger</keyword>
<name>ANKY2_CHICK</name>
<accession>Q5ZMD2</accession>
<feature type="chain" id="PRO_0000247168" description="Ankyrin repeat and MYND domain-containing protein 2">
    <location>
        <begin position="1"/>
        <end position="460"/>
    </location>
</feature>
<feature type="repeat" description="ANK 1">
    <location>
        <begin position="45"/>
        <end position="74"/>
    </location>
</feature>
<feature type="repeat" description="ANK 2">
    <location>
        <begin position="79"/>
        <end position="108"/>
    </location>
</feature>
<feature type="repeat" description="ANK 3">
    <location>
        <begin position="159"/>
        <end position="188"/>
    </location>
</feature>
<feature type="zinc finger region" description="MYND-type" evidence="2">
    <location>
        <begin position="320"/>
        <end position="357"/>
    </location>
</feature>
<feature type="region of interest" description="Disordered" evidence="3">
    <location>
        <begin position="371"/>
        <end position="460"/>
    </location>
</feature>
<feature type="compositionally biased region" description="Basic and acidic residues" evidence="3">
    <location>
        <begin position="371"/>
        <end position="387"/>
    </location>
</feature>
<feature type="compositionally biased region" description="Basic and acidic residues" evidence="3">
    <location>
        <begin position="425"/>
        <end position="436"/>
    </location>
</feature>
<feature type="binding site" evidence="2">
    <location>
        <position position="320"/>
    </location>
    <ligand>
        <name>Zn(2+)</name>
        <dbReference type="ChEBI" id="CHEBI:29105"/>
        <label>1</label>
    </ligand>
</feature>
<feature type="binding site" evidence="2">
    <location>
        <position position="323"/>
    </location>
    <ligand>
        <name>Zn(2+)</name>
        <dbReference type="ChEBI" id="CHEBI:29105"/>
        <label>1</label>
    </ligand>
</feature>
<feature type="binding site" evidence="2">
    <location>
        <position position="332"/>
    </location>
    <ligand>
        <name>Zn(2+)</name>
        <dbReference type="ChEBI" id="CHEBI:29105"/>
        <label>2</label>
    </ligand>
</feature>
<feature type="binding site" evidence="2">
    <location>
        <position position="335"/>
    </location>
    <ligand>
        <name>Zn(2+)</name>
        <dbReference type="ChEBI" id="CHEBI:29105"/>
        <label>2</label>
    </ligand>
</feature>
<feature type="binding site" evidence="2">
    <location>
        <position position="341"/>
    </location>
    <ligand>
        <name>Zn(2+)</name>
        <dbReference type="ChEBI" id="CHEBI:29105"/>
        <label>1</label>
    </ligand>
</feature>
<feature type="binding site" evidence="2">
    <location>
        <position position="345"/>
    </location>
    <ligand>
        <name>Zn(2+)</name>
        <dbReference type="ChEBI" id="CHEBI:29105"/>
        <label>1</label>
    </ligand>
</feature>
<feature type="binding site" evidence="2">
    <location>
        <position position="353"/>
    </location>
    <ligand>
        <name>Zn(2+)</name>
        <dbReference type="ChEBI" id="CHEBI:29105"/>
        <label>2</label>
    </ligand>
</feature>
<feature type="binding site" evidence="2">
    <location>
        <position position="357"/>
    </location>
    <ligand>
        <name>Zn(2+)</name>
        <dbReference type="ChEBI" id="CHEBI:29105"/>
        <label>2</label>
    </ligand>
</feature>
<comment type="function">
    <text evidence="1">May be involved in the trafficking of signaling proteins to the cilia.</text>
</comment>
<comment type="subcellular location">
    <subcellularLocation>
        <location evidence="1">Cell projection</location>
        <location evidence="1">Cilium</location>
    </subcellularLocation>
</comment>